<keyword id="KW-0007">Acetylation</keyword>
<keyword id="KW-0009">Actin-binding</keyword>
<keyword id="KW-0067">ATP-binding</keyword>
<keyword id="KW-1003">Cell membrane</keyword>
<keyword id="KW-0966">Cell projection</keyword>
<keyword id="KW-0963">Cytoplasm</keyword>
<keyword id="KW-0968">Cytoplasmic vesicle</keyword>
<keyword id="KW-0472">Membrane</keyword>
<keyword id="KW-0488">Methylation</keyword>
<keyword id="KW-0505">Motor protein</keyword>
<keyword id="KW-0518">Myosin</keyword>
<keyword id="KW-0547">Nucleotide-binding</keyword>
<keyword id="KW-1185">Reference proteome</keyword>
<keyword id="KW-0677">Repeat</keyword>
<protein>
    <recommendedName>
        <fullName>Unconventional myosin-Ic</fullName>
    </recommendedName>
    <alternativeName>
        <fullName>Myosin I beta</fullName>
        <shortName>MMI-beta</shortName>
        <shortName>MMIb</shortName>
    </alternativeName>
</protein>
<proteinExistence type="evidence at transcript level"/>
<sequence>MESALTARDRVGVQDFVLLENFTSEAAFIENLRKRFKENLIYTYIGSVLVSVNPYKELEIYSKQNMERYRGVSFYEVSPHLYAIADNSYRSLRTERKDQCILISGESGAGKTEATKKILQYYAVTCPASQQVETVKDRLLQSNPVLEAFGNTKTLRNDNSSRFGKYMDVQFDYRGAPVGGHILNYLLEKSRVVHQNHGERNFHIFYQLLEGGEEDLLRRLGLEKNPQQYHYLVKGHCARVSSINDKNDWKVVRRALSIISFNDNEVEDLLSIVASVLHLGNVQFAADEQGNAQVTTENQIKYLARLLAVEGSVLRDALIHKKIIAKGEELISPLNLEQAAYARDALAKAIYGRTFSWLVNKVNKSLAYKEGEFPGWRSTTVLGLLDIYGFEVFQHNSFEQFCINYCNEKLQQLFIELTLKSEQEEYESEGIAWEPVQYFNNKIICDLVEEKFKGIISILDEECLRPGDATDTTFLEKLEETVKNHPHFLTHKLADQKTRKSLGREEFRLLHYAGEVTYSVAGFLDKNNDLLFRNLKETMCNSENPIINQCFDRTELTDKKRPETAATQFKNSLSKLMEILMSKEPSYIRCIKPNDAKQADRFDEVLIRHQVKYLGLMENLRVRRAGFAYRRKYEVFLQRYKSLCPETWPTWDGRPHDGVAVLVKHLGYKQEEYKMGRTKIFIRFPKTLFATEDALEVRKQSLATKMQATWRGFYRRKKFLHMKHSAIAIQSWWRGTLGRRKAAKRKWAVQTIRRFIKGFIYRNHPRCPENEYFLDYIRFSFLMNLKRNLPKNVLDKSWPTPPPSLCEASQLLRQLCMQNMVWTYCKRISPEWKQQLEQKVIASEIFKGKKDNYPQSVPRLFINTRLGNEEINAKVLQALENEAIKYAVPVIKYDRKGYKARSRQLLLTQNAVIIVEDSKIKQRIDYANLTGISVSSLSDNLFVLHVHCEDNKQKGDVVLQSDHVIETLTKTAMRADKVNNININQGSIKFTVGQGKEGIIDFISGSELLIAKAKNGHLTVVAPRLNSR</sequence>
<organism>
    <name type="scientific">Gallus gallus</name>
    <name type="common">Chicken</name>
    <dbReference type="NCBI Taxonomy" id="9031"/>
    <lineage>
        <taxon>Eukaryota</taxon>
        <taxon>Metazoa</taxon>
        <taxon>Chordata</taxon>
        <taxon>Craniata</taxon>
        <taxon>Vertebrata</taxon>
        <taxon>Euteleostomi</taxon>
        <taxon>Archelosauria</taxon>
        <taxon>Archosauria</taxon>
        <taxon>Dinosauria</taxon>
        <taxon>Saurischia</taxon>
        <taxon>Theropoda</taxon>
        <taxon>Coelurosauria</taxon>
        <taxon>Aves</taxon>
        <taxon>Neognathae</taxon>
        <taxon>Galloanserae</taxon>
        <taxon>Galliformes</taxon>
        <taxon>Phasianidae</taxon>
        <taxon>Phasianinae</taxon>
        <taxon>Gallus</taxon>
    </lineage>
</organism>
<dbReference type="EMBL" id="AJ719828">
    <property type="protein sequence ID" value="CAG31487.1"/>
    <property type="molecule type" value="mRNA"/>
</dbReference>
<dbReference type="RefSeq" id="NP_001006220.2">
    <property type="nucleotide sequence ID" value="NM_001006220.2"/>
</dbReference>
<dbReference type="SMR" id="Q5ZLA6"/>
<dbReference type="FunCoup" id="Q5ZLA6">
    <property type="interactions" value="1197"/>
</dbReference>
<dbReference type="STRING" id="9031.ENSGALP00000053701"/>
<dbReference type="GlyGen" id="Q5ZLA6">
    <property type="glycosylation" value="2 sites"/>
</dbReference>
<dbReference type="PaxDb" id="9031-ENSGALP00000004265"/>
<dbReference type="GeneID" id="417555"/>
<dbReference type="KEGG" id="gga:417555"/>
<dbReference type="CTD" id="4641"/>
<dbReference type="VEuPathDB" id="HostDB:geneid_417555"/>
<dbReference type="eggNOG" id="KOG0164">
    <property type="taxonomic scope" value="Eukaryota"/>
</dbReference>
<dbReference type="InParanoid" id="Q5ZLA6"/>
<dbReference type="OrthoDB" id="6108017at2759"/>
<dbReference type="PhylomeDB" id="Q5ZLA6"/>
<dbReference type="PRO" id="PR:Q5ZLA6"/>
<dbReference type="Proteomes" id="UP000000539">
    <property type="component" value="Unassembled WGS sequence"/>
</dbReference>
<dbReference type="GO" id="GO:0015629">
    <property type="term" value="C:actin cytoskeleton"/>
    <property type="evidence" value="ECO:0000318"/>
    <property type="project" value="GO_Central"/>
</dbReference>
<dbReference type="GO" id="GO:0005938">
    <property type="term" value="C:cell cortex"/>
    <property type="evidence" value="ECO:0007669"/>
    <property type="project" value="UniProtKB-SubCell"/>
</dbReference>
<dbReference type="GO" id="GO:0005737">
    <property type="term" value="C:cytoplasm"/>
    <property type="evidence" value="ECO:0000318"/>
    <property type="project" value="GO_Central"/>
</dbReference>
<dbReference type="GO" id="GO:0031410">
    <property type="term" value="C:cytoplasmic vesicle"/>
    <property type="evidence" value="ECO:0007669"/>
    <property type="project" value="UniProtKB-KW"/>
</dbReference>
<dbReference type="GO" id="GO:0005902">
    <property type="term" value="C:microvillus"/>
    <property type="evidence" value="ECO:0000318"/>
    <property type="project" value="GO_Central"/>
</dbReference>
<dbReference type="GO" id="GO:0016459">
    <property type="term" value="C:myosin complex"/>
    <property type="evidence" value="ECO:0007669"/>
    <property type="project" value="UniProtKB-KW"/>
</dbReference>
<dbReference type="GO" id="GO:0005886">
    <property type="term" value="C:plasma membrane"/>
    <property type="evidence" value="ECO:0000318"/>
    <property type="project" value="GO_Central"/>
</dbReference>
<dbReference type="GO" id="GO:0032587">
    <property type="term" value="C:ruffle membrane"/>
    <property type="evidence" value="ECO:0007669"/>
    <property type="project" value="UniProtKB-SubCell"/>
</dbReference>
<dbReference type="GO" id="GO:0060171">
    <property type="term" value="C:stereocilium membrane"/>
    <property type="evidence" value="ECO:0007669"/>
    <property type="project" value="UniProtKB-SubCell"/>
</dbReference>
<dbReference type="GO" id="GO:0051015">
    <property type="term" value="F:actin filament binding"/>
    <property type="evidence" value="ECO:0000318"/>
    <property type="project" value="GO_Central"/>
</dbReference>
<dbReference type="GO" id="GO:0005524">
    <property type="term" value="F:ATP binding"/>
    <property type="evidence" value="ECO:0007669"/>
    <property type="project" value="UniProtKB-KW"/>
</dbReference>
<dbReference type="GO" id="GO:0000146">
    <property type="term" value="F:microfilament motor activity"/>
    <property type="evidence" value="ECO:0000318"/>
    <property type="project" value="GO_Central"/>
</dbReference>
<dbReference type="GO" id="GO:0007015">
    <property type="term" value="P:actin filament organization"/>
    <property type="evidence" value="ECO:0000318"/>
    <property type="project" value="GO_Central"/>
</dbReference>
<dbReference type="GO" id="GO:0030048">
    <property type="term" value="P:actin filament-based movement"/>
    <property type="evidence" value="ECO:0000318"/>
    <property type="project" value="GO_Central"/>
</dbReference>
<dbReference type="GO" id="GO:0006897">
    <property type="term" value="P:endocytosis"/>
    <property type="evidence" value="ECO:0000318"/>
    <property type="project" value="GO_Central"/>
</dbReference>
<dbReference type="CDD" id="cd23766">
    <property type="entry name" value="IQCG"/>
    <property type="match status" value="1"/>
</dbReference>
<dbReference type="CDD" id="cd01378">
    <property type="entry name" value="MYSc_Myo1"/>
    <property type="match status" value="1"/>
</dbReference>
<dbReference type="FunFam" id="1.10.10.820:FF:000001">
    <property type="entry name" value="Myosin heavy chain"/>
    <property type="match status" value="1"/>
</dbReference>
<dbReference type="FunFam" id="3.40.850.10:FF:000101">
    <property type="entry name" value="Slow myosin heavy chain 2"/>
    <property type="match status" value="1"/>
</dbReference>
<dbReference type="FunFam" id="1.20.58.530:FF:000004">
    <property type="entry name" value="Unconventional myosin ID"/>
    <property type="match status" value="1"/>
</dbReference>
<dbReference type="FunFam" id="1.20.120.720:FF:000013">
    <property type="entry name" value="unconventional myosin-Ic isoform X2"/>
    <property type="match status" value="1"/>
</dbReference>
<dbReference type="Gene3D" id="1.10.10.820">
    <property type="match status" value="1"/>
</dbReference>
<dbReference type="Gene3D" id="1.20.5.190">
    <property type="match status" value="1"/>
</dbReference>
<dbReference type="Gene3D" id="1.20.58.530">
    <property type="match status" value="1"/>
</dbReference>
<dbReference type="Gene3D" id="6.20.240.20">
    <property type="match status" value="1"/>
</dbReference>
<dbReference type="Gene3D" id="3.40.850.10">
    <property type="entry name" value="Kinesin motor domain"/>
    <property type="match status" value="1"/>
</dbReference>
<dbReference type="Gene3D" id="1.20.120.720">
    <property type="entry name" value="Myosin VI head, motor domain, U50 subdomain"/>
    <property type="match status" value="1"/>
</dbReference>
<dbReference type="InterPro" id="IPR000048">
    <property type="entry name" value="IQ_motif_EF-hand-BS"/>
</dbReference>
<dbReference type="InterPro" id="IPR036961">
    <property type="entry name" value="Kinesin_motor_dom_sf"/>
</dbReference>
<dbReference type="InterPro" id="IPR001609">
    <property type="entry name" value="Myosin_head_motor_dom-like"/>
</dbReference>
<dbReference type="InterPro" id="IPR010926">
    <property type="entry name" value="Myosin_TH1"/>
</dbReference>
<dbReference type="InterPro" id="IPR036072">
    <property type="entry name" value="MYSc_Myo1"/>
</dbReference>
<dbReference type="InterPro" id="IPR027417">
    <property type="entry name" value="P-loop_NTPase"/>
</dbReference>
<dbReference type="PANTHER" id="PTHR13140">
    <property type="entry name" value="MYOSIN"/>
    <property type="match status" value="1"/>
</dbReference>
<dbReference type="PANTHER" id="PTHR13140:SF255">
    <property type="entry name" value="UNCONVENTIONAL MYOSIN-IC"/>
    <property type="match status" value="1"/>
</dbReference>
<dbReference type="Pfam" id="PF00063">
    <property type="entry name" value="Myosin_head"/>
    <property type="match status" value="1"/>
</dbReference>
<dbReference type="Pfam" id="PF06017">
    <property type="entry name" value="Myosin_TH1"/>
    <property type="match status" value="1"/>
</dbReference>
<dbReference type="PRINTS" id="PR00193">
    <property type="entry name" value="MYOSINHEAVY"/>
</dbReference>
<dbReference type="SMART" id="SM00015">
    <property type="entry name" value="IQ"/>
    <property type="match status" value="2"/>
</dbReference>
<dbReference type="SMART" id="SM00242">
    <property type="entry name" value="MYSc"/>
    <property type="match status" value="1"/>
</dbReference>
<dbReference type="SUPFAM" id="SSF52540">
    <property type="entry name" value="P-loop containing nucleoside triphosphate hydrolases"/>
    <property type="match status" value="1"/>
</dbReference>
<dbReference type="PROSITE" id="PS50096">
    <property type="entry name" value="IQ"/>
    <property type="match status" value="2"/>
</dbReference>
<dbReference type="PROSITE" id="PS51456">
    <property type="entry name" value="MYOSIN_MOTOR"/>
    <property type="match status" value="1"/>
</dbReference>
<dbReference type="PROSITE" id="PS51757">
    <property type="entry name" value="TH1"/>
    <property type="match status" value="1"/>
</dbReference>
<feature type="chain" id="PRO_0000369410" description="Unconventional myosin-Ic">
    <location>
        <begin position="1"/>
        <end position="1028"/>
    </location>
</feature>
<feature type="domain" description="Myosin motor" evidence="6">
    <location>
        <begin position="12"/>
        <end position="696"/>
    </location>
</feature>
<feature type="domain" description="IQ 1" evidence="5">
    <location>
        <begin position="699"/>
        <end position="728"/>
    </location>
</feature>
<feature type="domain" description="IQ 2" evidence="5">
    <location>
        <begin position="722"/>
        <end position="751"/>
    </location>
</feature>
<feature type="domain" description="TH1" evidence="7">
    <location>
        <begin position="850"/>
        <end position="1024"/>
    </location>
</feature>
<feature type="region of interest" description="Actin-binding" evidence="6">
    <location>
        <begin position="573"/>
        <end position="595"/>
    </location>
</feature>
<feature type="binding site" evidence="1">
    <location>
        <position position="53"/>
    </location>
    <ligand>
        <name>ATP</name>
        <dbReference type="ChEBI" id="CHEBI:30616"/>
    </ligand>
</feature>
<feature type="binding site" evidence="1">
    <location>
        <position position="61"/>
    </location>
    <ligand>
        <name>ATP</name>
        <dbReference type="ChEBI" id="CHEBI:30616"/>
    </ligand>
</feature>
<feature type="binding site" evidence="1">
    <location>
        <begin position="104"/>
        <end position="113"/>
    </location>
    <ligand>
        <name>ATP</name>
        <dbReference type="ChEBI" id="CHEBI:30616"/>
    </ligand>
</feature>
<feature type="binding site" evidence="1">
    <location>
        <begin position="157"/>
        <end position="161"/>
    </location>
    <ligand>
        <name>ATP</name>
        <dbReference type="ChEBI" id="CHEBI:30616"/>
    </ligand>
</feature>
<feature type="modified residue" description="N-acetylmethionine" evidence="1">
    <location>
        <position position="1"/>
    </location>
</feature>
<feature type="modified residue" description="N6-methyllysine" evidence="1">
    <location>
        <position position="348"/>
    </location>
</feature>
<gene>
    <name type="primary">MYO1C</name>
    <name type="ORF">RCJMB04_6o17</name>
</gene>
<evidence type="ECO:0000250" key="1"/>
<evidence type="ECO:0000250" key="2">
    <source>
        <dbReference type="UniProtKB" id="O00159"/>
    </source>
</evidence>
<evidence type="ECO:0000250" key="3">
    <source>
        <dbReference type="UniProtKB" id="Q92002"/>
    </source>
</evidence>
<evidence type="ECO:0000250" key="4">
    <source>
        <dbReference type="UniProtKB" id="Q9WTI7"/>
    </source>
</evidence>
<evidence type="ECO:0000255" key="5">
    <source>
        <dbReference type="PROSITE-ProRule" id="PRU00116"/>
    </source>
</evidence>
<evidence type="ECO:0000255" key="6">
    <source>
        <dbReference type="PROSITE-ProRule" id="PRU00782"/>
    </source>
</evidence>
<evidence type="ECO:0000255" key="7">
    <source>
        <dbReference type="PROSITE-ProRule" id="PRU01093"/>
    </source>
</evidence>
<evidence type="ECO:0000305" key="8"/>
<comment type="function">
    <text evidence="4">Myosins are actin-based motor molecules with ATPase activity. Unconventional myosins serve in intracellular movements. Their highly divergent tails are presumed to bind to membranous compartments, which would be moved relative to actin filaments (By similarity).</text>
</comment>
<comment type="subunit">
    <text evidence="2">Interacts (via its IQ motifs) with CALM.</text>
</comment>
<comment type="subcellular location">
    <subcellularLocation>
        <location evidence="4">Cytoplasm</location>
    </subcellularLocation>
    <subcellularLocation>
        <location evidence="4">Cytoplasm</location>
        <location evidence="4">Cell cortex</location>
    </subcellularLocation>
    <subcellularLocation>
        <location evidence="4">Cell projection</location>
        <location evidence="4">Ruffle membrane</location>
    </subcellularLocation>
    <subcellularLocation>
        <location evidence="4">Cytoplasmic vesicle</location>
    </subcellularLocation>
    <subcellularLocation>
        <location evidence="3">Cell projection</location>
        <location evidence="3">Stereocilium membrane</location>
    </subcellularLocation>
</comment>
<comment type="domain">
    <text evidence="1">Binds directly to large unilamellar vesicles (LUVs) containing phosphatidylinositol 4,5-bisphosphate (PIP2) or inositol 1,4,5-trisphosphate (InsP3). The PIP2-binding site corresponds to a putative PH domain present in its tail domain (By similarity).</text>
</comment>
<comment type="similarity">
    <text evidence="8">Belongs to the TRAFAC class myosin-kinesin ATPase superfamily. Myosin family.</text>
</comment>
<comment type="caution">
    <text evidence="8">Represents an unconventional myosin. This protein should not be confused with the conventional myosin-1 (MYH1).</text>
</comment>
<accession>Q5ZLA6</accession>
<reference key="1">
    <citation type="journal article" date="2005" name="Genome Biol.">
        <title>Full-length cDNAs from chicken bursal lymphocytes to facilitate gene function analysis.</title>
        <authorList>
            <person name="Caldwell R.B."/>
            <person name="Kierzek A.M."/>
            <person name="Arakawa H."/>
            <person name="Bezzubov Y."/>
            <person name="Zaim J."/>
            <person name="Fiedler P."/>
            <person name="Kutter S."/>
            <person name="Blagodatski A."/>
            <person name="Kostovska D."/>
            <person name="Koter M."/>
            <person name="Plachy J."/>
            <person name="Carninci P."/>
            <person name="Hayashizaki Y."/>
            <person name="Buerstedde J.-M."/>
        </authorList>
    </citation>
    <scope>NUCLEOTIDE SEQUENCE [LARGE SCALE MRNA]</scope>
    <source>
        <strain>CB</strain>
        <tissue>Bursa of Fabricius</tissue>
    </source>
</reference>
<name>MYO1C_CHICK</name>